<evidence type="ECO:0000255" key="1">
    <source>
        <dbReference type="HAMAP-Rule" id="MF_00036"/>
    </source>
</evidence>
<accession>Q8YUD4</accession>
<comment type="function">
    <text evidence="1">Catalyzes the attachment of alanine to tRNA(Ala) in a two-step reaction: alanine is first activated by ATP to form Ala-AMP and then transferred to the acceptor end of tRNA(Ala). Also edits incorrectly charged Ser-tRNA(Ala) and Gly-tRNA(Ala) via its editing domain.</text>
</comment>
<comment type="catalytic activity">
    <reaction evidence="1">
        <text>tRNA(Ala) + L-alanine + ATP = L-alanyl-tRNA(Ala) + AMP + diphosphate</text>
        <dbReference type="Rhea" id="RHEA:12540"/>
        <dbReference type="Rhea" id="RHEA-COMP:9657"/>
        <dbReference type="Rhea" id="RHEA-COMP:9923"/>
        <dbReference type="ChEBI" id="CHEBI:30616"/>
        <dbReference type="ChEBI" id="CHEBI:33019"/>
        <dbReference type="ChEBI" id="CHEBI:57972"/>
        <dbReference type="ChEBI" id="CHEBI:78442"/>
        <dbReference type="ChEBI" id="CHEBI:78497"/>
        <dbReference type="ChEBI" id="CHEBI:456215"/>
        <dbReference type="EC" id="6.1.1.7"/>
    </reaction>
</comment>
<comment type="cofactor">
    <cofactor evidence="1">
        <name>Zn(2+)</name>
        <dbReference type="ChEBI" id="CHEBI:29105"/>
    </cofactor>
    <text evidence="1">Binds 1 zinc ion per subunit.</text>
</comment>
<comment type="subcellular location">
    <subcellularLocation>
        <location evidence="1">Cytoplasm</location>
    </subcellularLocation>
</comment>
<comment type="domain">
    <text evidence="1">Consists of three domains; the N-terminal catalytic domain, the editing domain and the C-terminal C-Ala domain. The editing domain removes incorrectly charged amino acids, while the C-Ala domain, along with tRNA(Ala), serves as a bridge to cooperatively bring together the editing and aminoacylation centers thus stimulating deacylation of misacylated tRNAs.</text>
</comment>
<comment type="similarity">
    <text evidence="1">Belongs to the class-II aminoacyl-tRNA synthetase family.</text>
</comment>
<keyword id="KW-0030">Aminoacyl-tRNA synthetase</keyword>
<keyword id="KW-0067">ATP-binding</keyword>
<keyword id="KW-0963">Cytoplasm</keyword>
<keyword id="KW-0436">Ligase</keyword>
<keyword id="KW-0479">Metal-binding</keyword>
<keyword id="KW-0547">Nucleotide-binding</keyword>
<keyword id="KW-0648">Protein biosynthesis</keyword>
<keyword id="KW-1185">Reference proteome</keyword>
<keyword id="KW-0694">RNA-binding</keyword>
<keyword id="KW-0820">tRNA-binding</keyword>
<keyword id="KW-0862">Zinc</keyword>
<feature type="chain" id="PRO_0000075045" description="Alanine--tRNA ligase">
    <location>
        <begin position="1"/>
        <end position="880"/>
    </location>
</feature>
<feature type="binding site" evidence="1">
    <location>
        <position position="566"/>
    </location>
    <ligand>
        <name>Zn(2+)</name>
        <dbReference type="ChEBI" id="CHEBI:29105"/>
    </ligand>
</feature>
<feature type="binding site" evidence="1">
    <location>
        <position position="570"/>
    </location>
    <ligand>
        <name>Zn(2+)</name>
        <dbReference type="ChEBI" id="CHEBI:29105"/>
    </ligand>
</feature>
<feature type="binding site" evidence="1">
    <location>
        <position position="668"/>
    </location>
    <ligand>
        <name>Zn(2+)</name>
        <dbReference type="ChEBI" id="CHEBI:29105"/>
    </ligand>
</feature>
<feature type="binding site" evidence="1">
    <location>
        <position position="672"/>
    </location>
    <ligand>
        <name>Zn(2+)</name>
        <dbReference type="ChEBI" id="CHEBI:29105"/>
    </ligand>
</feature>
<reference key="1">
    <citation type="journal article" date="2001" name="DNA Res.">
        <title>Complete genomic sequence of the filamentous nitrogen-fixing cyanobacterium Anabaena sp. strain PCC 7120.</title>
        <authorList>
            <person name="Kaneko T."/>
            <person name="Nakamura Y."/>
            <person name="Wolk C.P."/>
            <person name="Kuritz T."/>
            <person name="Sasamoto S."/>
            <person name="Watanabe A."/>
            <person name="Iriguchi M."/>
            <person name="Ishikawa A."/>
            <person name="Kawashima K."/>
            <person name="Kimura T."/>
            <person name="Kishida Y."/>
            <person name="Kohara M."/>
            <person name="Matsumoto M."/>
            <person name="Matsuno A."/>
            <person name="Muraki A."/>
            <person name="Nakazaki N."/>
            <person name="Shimpo S."/>
            <person name="Sugimoto M."/>
            <person name="Takazawa M."/>
            <person name="Yamada M."/>
            <person name="Yasuda M."/>
            <person name="Tabata S."/>
        </authorList>
    </citation>
    <scope>NUCLEOTIDE SEQUENCE [LARGE SCALE GENOMIC DNA]</scope>
    <source>
        <strain>PCC 7120 / SAG 25.82 / UTEX 2576</strain>
    </source>
</reference>
<sequence>MSSNPQHLSGNEIRTRFLDFYAQRGHQILASASLVPEDPTVLLTIAGMLPFKPIFLGQRTPEFKRATTSQKCIRTNDIENVGRTKRHQTFFEMLGNFSFGDYFKEQAIAWGWEISTEVFGLPKERLVVSVFEEDDEAYAIWRDQIGVTEARIKRMGADDNFWVSGPTGPCGPCSEIYYDFHPERGDDNIDLEDDTRFIEFYNLVFMQYNRDASGNLTPLQNKNIDTGMGLERITQILQRVPNNYETDLIFPIIETAAKIAGIDYHSSDESTKVSLKVIGDHVRSVVHMIADEIRASNVGRGYVLRRLIRRVVRHGRLIGISGEFINQVAETAIALSESAYPNVRQRETVIKAELEREEANFLKTLDRGEKLLAEIIAEVKKQGKTVISGKDAFTLYDTHGFPLELTQEIAEENNLTVDVEGFQKQMEIQQQGGRGAHETIDLTVQGSLDKLAEHIHATEFIGYSQATATAKVEVLLVDGVVQEEAEAGTEVQIVLDETPFYAESGGQIGDRGYISGDGIVVQVEDVKKESDFFVHFGRIERGTLRVGDNVTAQIDRAGRRRAQANHTATHLLQAALKTIVDGGISQAGSLVSFDRLRFDFNSPRGLTVEEIQQVEEQINTWIAEAHSAKIELLPLAEAKARGAVAMFGEKYGDEVRVIDFPGVSMELCGGTHVSNTAEIGVFKIISEAGVASGVRRIEAVSGLAVLDYLNVRDKVVKDLSDRFKVKPEELPERITTLQNELRTTEKQLETLKGQLAIAKSDSLLQTADTCGDYKIIVAQLEGVDPESLKSAAERLLQKIGNGAVVLGSVPEADKVSLVAAFSPEVNKKGLQAGKFIGAIAKICGGGGGGRPNLAQAGGRDASKLPAALEQAQSELKSALG</sequence>
<protein>
    <recommendedName>
        <fullName evidence="1">Alanine--tRNA ligase</fullName>
        <ecNumber evidence="1">6.1.1.7</ecNumber>
    </recommendedName>
    <alternativeName>
        <fullName evidence="1">Alanyl-tRNA synthetase</fullName>
        <shortName evidence="1">AlaRS</shortName>
    </alternativeName>
</protein>
<gene>
    <name evidence="1" type="primary">alaS</name>
    <name type="ordered locus">alr2418</name>
</gene>
<name>SYA_NOSS1</name>
<dbReference type="EC" id="6.1.1.7" evidence="1"/>
<dbReference type="EMBL" id="BA000019">
    <property type="protein sequence ID" value="BAB74117.1"/>
    <property type="molecule type" value="Genomic_DNA"/>
</dbReference>
<dbReference type="PIR" id="AC2108">
    <property type="entry name" value="AC2108"/>
</dbReference>
<dbReference type="RefSeq" id="WP_010996574.1">
    <property type="nucleotide sequence ID" value="NZ_RSCN01000002.1"/>
</dbReference>
<dbReference type="SMR" id="Q8YUD4"/>
<dbReference type="STRING" id="103690.gene:10494448"/>
<dbReference type="KEGG" id="ana:alr2418"/>
<dbReference type="eggNOG" id="COG0013">
    <property type="taxonomic scope" value="Bacteria"/>
</dbReference>
<dbReference type="OrthoDB" id="9803884at2"/>
<dbReference type="Proteomes" id="UP000002483">
    <property type="component" value="Chromosome"/>
</dbReference>
<dbReference type="GO" id="GO:0005829">
    <property type="term" value="C:cytosol"/>
    <property type="evidence" value="ECO:0007669"/>
    <property type="project" value="TreeGrafter"/>
</dbReference>
<dbReference type="GO" id="GO:0004813">
    <property type="term" value="F:alanine-tRNA ligase activity"/>
    <property type="evidence" value="ECO:0007669"/>
    <property type="project" value="UniProtKB-UniRule"/>
</dbReference>
<dbReference type="GO" id="GO:0002161">
    <property type="term" value="F:aminoacyl-tRNA deacylase activity"/>
    <property type="evidence" value="ECO:0007669"/>
    <property type="project" value="TreeGrafter"/>
</dbReference>
<dbReference type="GO" id="GO:0005524">
    <property type="term" value="F:ATP binding"/>
    <property type="evidence" value="ECO:0007669"/>
    <property type="project" value="UniProtKB-UniRule"/>
</dbReference>
<dbReference type="GO" id="GO:0000049">
    <property type="term" value="F:tRNA binding"/>
    <property type="evidence" value="ECO:0007669"/>
    <property type="project" value="UniProtKB-KW"/>
</dbReference>
<dbReference type="GO" id="GO:0008270">
    <property type="term" value="F:zinc ion binding"/>
    <property type="evidence" value="ECO:0007669"/>
    <property type="project" value="UniProtKB-UniRule"/>
</dbReference>
<dbReference type="GO" id="GO:0006419">
    <property type="term" value="P:alanyl-tRNA aminoacylation"/>
    <property type="evidence" value="ECO:0007669"/>
    <property type="project" value="UniProtKB-UniRule"/>
</dbReference>
<dbReference type="CDD" id="cd00673">
    <property type="entry name" value="AlaRS_core"/>
    <property type="match status" value="1"/>
</dbReference>
<dbReference type="FunFam" id="2.40.30.130:FF:000001">
    <property type="entry name" value="Alanine--tRNA ligase"/>
    <property type="match status" value="1"/>
</dbReference>
<dbReference type="FunFam" id="3.10.310.40:FF:000001">
    <property type="entry name" value="Alanine--tRNA ligase"/>
    <property type="match status" value="1"/>
</dbReference>
<dbReference type="FunFam" id="3.30.54.20:FF:000001">
    <property type="entry name" value="Alanine--tRNA ligase"/>
    <property type="match status" value="1"/>
</dbReference>
<dbReference type="FunFam" id="3.30.930.10:FF:000004">
    <property type="entry name" value="Alanine--tRNA ligase"/>
    <property type="match status" value="1"/>
</dbReference>
<dbReference type="FunFam" id="3.30.980.10:FF:000004">
    <property type="entry name" value="Alanine--tRNA ligase, cytoplasmic"/>
    <property type="match status" value="1"/>
</dbReference>
<dbReference type="Gene3D" id="2.40.30.130">
    <property type="match status" value="1"/>
</dbReference>
<dbReference type="Gene3D" id="3.10.310.40">
    <property type="match status" value="1"/>
</dbReference>
<dbReference type="Gene3D" id="3.30.54.20">
    <property type="match status" value="1"/>
</dbReference>
<dbReference type="Gene3D" id="6.10.250.550">
    <property type="match status" value="1"/>
</dbReference>
<dbReference type="Gene3D" id="3.30.930.10">
    <property type="entry name" value="Bira Bifunctional Protein, Domain 2"/>
    <property type="match status" value="1"/>
</dbReference>
<dbReference type="Gene3D" id="3.30.980.10">
    <property type="entry name" value="Threonyl-trna Synthetase, Chain A, domain 2"/>
    <property type="match status" value="1"/>
</dbReference>
<dbReference type="HAMAP" id="MF_00036_B">
    <property type="entry name" value="Ala_tRNA_synth_B"/>
    <property type="match status" value="1"/>
</dbReference>
<dbReference type="InterPro" id="IPR045864">
    <property type="entry name" value="aa-tRNA-synth_II/BPL/LPL"/>
</dbReference>
<dbReference type="InterPro" id="IPR002318">
    <property type="entry name" value="Ala-tRNA-lgiase_IIc"/>
</dbReference>
<dbReference type="InterPro" id="IPR018162">
    <property type="entry name" value="Ala-tRNA-ligase_IIc_anticod-bd"/>
</dbReference>
<dbReference type="InterPro" id="IPR018165">
    <property type="entry name" value="Ala-tRNA-synth_IIc_core"/>
</dbReference>
<dbReference type="InterPro" id="IPR018164">
    <property type="entry name" value="Ala-tRNA-synth_IIc_N"/>
</dbReference>
<dbReference type="InterPro" id="IPR050058">
    <property type="entry name" value="Ala-tRNA_ligase"/>
</dbReference>
<dbReference type="InterPro" id="IPR023033">
    <property type="entry name" value="Ala_tRNA_ligase_euk/bac"/>
</dbReference>
<dbReference type="InterPro" id="IPR003156">
    <property type="entry name" value="DHHA1_dom"/>
</dbReference>
<dbReference type="InterPro" id="IPR018163">
    <property type="entry name" value="Thr/Ala-tRNA-synth_IIc_edit"/>
</dbReference>
<dbReference type="InterPro" id="IPR009000">
    <property type="entry name" value="Transl_B-barrel_sf"/>
</dbReference>
<dbReference type="InterPro" id="IPR012947">
    <property type="entry name" value="tRNA_SAD"/>
</dbReference>
<dbReference type="NCBIfam" id="TIGR00344">
    <property type="entry name" value="alaS"/>
    <property type="match status" value="1"/>
</dbReference>
<dbReference type="PANTHER" id="PTHR11777:SF9">
    <property type="entry name" value="ALANINE--TRNA LIGASE, CYTOPLASMIC"/>
    <property type="match status" value="1"/>
</dbReference>
<dbReference type="PANTHER" id="PTHR11777">
    <property type="entry name" value="ALANYL-TRNA SYNTHETASE"/>
    <property type="match status" value="1"/>
</dbReference>
<dbReference type="Pfam" id="PF02272">
    <property type="entry name" value="DHHA1"/>
    <property type="match status" value="1"/>
</dbReference>
<dbReference type="Pfam" id="PF01411">
    <property type="entry name" value="tRNA-synt_2c"/>
    <property type="match status" value="1"/>
</dbReference>
<dbReference type="Pfam" id="PF07973">
    <property type="entry name" value="tRNA_SAD"/>
    <property type="match status" value="1"/>
</dbReference>
<dbReference type="PRINTS" id="PR00980">
    <property type="entry name" value="TRNASYNTHALA"/>
</dbReference>
<dbReference type="SMART" id="SM00863">
    <property type="entry name" value="tRNA_SAD"/>
    <property type="match status" value="1"/>
</dbReference>
<dbReference type="SUPFAM" id="SSF55681">
    <property type="entry name" value="Class II aaRS and biotin synthetases"/>
    <property type="match status" value="1"/>
</dbReference>
<dbReference type="SUPFAM" id="SSF101353">
    <property type="entry name" value="Putative anticodon-binding domain of alanyl-tRNA synthetase (AlaRS)"/>
    <property type="match status" value="1"/>
</dbReference>
<dbReference type="SUPFAM" id="SSF55186">
    <property type="entry name" value="ThrRS/AlaRS common domain"/>
    <property type="match status" value="1"/>
</dbReference>
<dbReference type="SUPFAM" id="SSF50447">
    <property type="entry name" value="Translation proteins"/>
    <property type="match status" value="1"/>
</dbReference>
<dbReference type="PROSITE" id="PS50860">
    <property type="entry name" value="AA_TRNA_LIGASE_II_ALA"/>
    <property type="match status" value="1"/>
</dbReference>
<organism>
    <name type="scientific">Nostoc sp. (strain PCC 7120 / SAG 25.82 / UTEX 2576)</name>
    <dbReference type="NCBI Taxonomy" id="103690"/>
    <lineage>
        <taxon>Bacteria</taxon>
        <taxon>Bacillati</taxon>
        <taxon>Cyanobacteriota</taxon>
        <taxon>Cyanophyceae</taxon>
        <taxon>Nostocales</taxon>
        <taxon>Nostocaceae</taxon>
        <taxon>Nostoc</taxon>
    </lineage>
</organism>
<proteinExistence type="inferred from homology"/>